<sequence length="459" mass="53230">MRSALPTFDEIWQRKFRHRLLIQAQQFPADTVFLIGCSGGMDSMLLLHLMSELFPHKVRAIYIDHQLQSSSRAWGVFVQNFAQQSHIPFTIQPVIVDTGNLENQAREARYAAFESHLKSNEVLVLAHHQQDQTETVLLRLLSGSGVKGLGAMKEIEQKKNICCWRPMLSVSRQQIEHWVEHLKIPYIQDLTNFDTTYDRAWCRETVWPVLQKRFPKMQEAISRTSILMQDADEILHEVLQQDLNQCGDLNHLDLSRLQQLSLARQRQLLSFWMKGKAIYRPAFEMVERVQQEVICAKADAKAALHWNHHYYVRYQNILYRVEKNKYLQKDLVSNVVSTIELQMDASLQLASGVFQIQPMQMGLSPQLFEQPLQLLPRQGGEKIHLYGRVGHWPLKKAIQEAQILPWLRHTIQILALDNVMLGVFTPKGFWLAQSSYCEAGGWQPNLISDVNYLRVEQNS</sequence>
<proteinExistence type="inferred from homology"/>
<keyword id="KW-0067">ATP-binding</keyword>
<keyword id="KW-0963">Cytoplasm</keyword>
<keyword id="KW-0436">Ligase</keyword>
<keyword id="KW-0547">Nucleotide-binding</keyword>
<keyword id="KW-0819">tRNA processing</keyword>
<dbReference type="EC" id="6.3.4.19" evidence="1"/>
<dbReference type="EMBL" id="CR543861">
    <property type="protein sequence ID" value="CAG69735.1"/>
    <property type="molecule type" value="Genomic_DNA"/>
</dbReference>
<dbReference type="RefSeq" id="WP_011182676.1">
    <property type="nucleotide sequence ID" value="NC_005966.1"/>
</dbReference>
<dbReference type="SMR" id="Q6F880"/>
<dbReference type="STRING" id="202950.GCA_001485005_02695"/>
<dbReference type="GeneID" id="45235257"/>
<dbReference type="KEGG" id="aci:ACIAD3034"/>
<dbReference type="eggNOG" id="COG0037">
    <property type="taxonomic scope" value="Bacteria"/>
</dbReference>
<dbReference type="HOGENOM" id="CLU_018869_2_0_6"/>
<dbReference type="OrthoDB" id="9807403at2"/>
<dbReference type="BioCyc" id="ASP62977:ACIAD_RS13710-MONOMER"/>
<dbReference type="Proteomes" id="UP000000430">
    <property type="component" value="Chromosome"/>
</dbReference>
<dbReference type="GO" id="GO:0005737">
    <property type="term" value="C:cytoplasm"/>
    <property type="evidence" value="ECO:0007669"/>
    <property type="project" value="UniProtKB-SubCell"/>
</dbReference>
<dbReference type="GO" id="GO:0005524">
    <property type="term" value="F:ATP binding"/>
    <property type="evidence" value="ECO:0007669"/>
    <property type="project" value="UniProtKB-UniRule"/>
</dbReference>
<dbReference type="GO" id="GO:0032267">
    <property type="term" value="F:tRNA(Ile)-lysidine synthase activity"/>
    <property type="evidence" value="ECO:0007669"/>
    <property type="project" value="UniProtKB-EC"/>
</dbReference>
<dbReference type="GO" id="GO:0006400">
    <property type="term" value="P:tRNA modification"/>
    <property type="evidence" value="ECO:0007669"/>
    <property type="project" value="UniProtKB-UniRule"/>
</dbReference>
<dbReference type="CDD" id="cd01992">
    <property type="entry name" value="TilS_N"/>
    <property type="match status" value="1"/>
</dbReference>
<dbReference type="Gene3D" id="1.20.59.20">
    <property type="match status" value="1"/>
</dbReference>
<dbReference type="Gene3D" id="3.40.50.620">
    <property type="entry name" value="HUPs"/>
    <property type="match status" value="1"/>
</dbReference>
<dbReference type="HAMAP" id="MF_01161">
    <property type="entry name" value="tRNA_Ile_lys_synt"/>
    <property type="match status" value="1"/>
</dbReference>
<dbReference type="InterPro" id="IPR012796">
    <property type="entry name" value="Lysidine-tRNA-synth_C"/>
</dbReference>
<dbReference type="InterPro" id="IPR014729">
    <property type="entry name" value="Rossmann-like_a/b/a_fold"/>
</dbReference>
<dbReference type="InterPro" id="IPR011063">
    <property type="entry name" value="TilS/TtcA_N"/>
</dbReference>
<dbReference type="InterPro" id="IPR012094">
    <property type="entry name" value="tRNA_Ile_lys_synt"/>
</dbReference>
<dbReference type="InterPro" id="IPR012795">
    <property type="entry name" value="tRNA_Ile_lys_synt_N"/>
</dbReference>
<dbReference type="InterPro" id="IPR015262">
    <property type="entry name" value="tRNA_Ile_lys_synt_subst-bd"/>
</dbReference>
<dbReference type="NCBIfam" id="TIGR02433">
    <property type="entry name" value="lysidine_TilS_C"/>
    <property type="match status" value="1"/>
</dbReference>
<dbReference type="NCBIfam" id="TIGR02432">
    <property type="entry name" value="lysidine_TilS_N"/>
    <property type="match status" value="1"/>
</dbReference>
<dbReference type="PANTHER" id="PTHR43033">
    <property type="entry name" value="TRNA(ILE)-LYSIDINE SYNTHASE-RELATED"/>
    <property type="match status" value="1"/>
</dbReference>
<dbReference type="PANTHER" id="PTHR43033:SF1">
    <property type="entry name" value="TRNA(ILE)-LYSIDINE SYNTHASE-RELATED"/>
    <property type="match status" value="1"/>
</dbReference>
<dbReference type="Pfam" id="PF01171">
    <property type="entry name" value="ATP_bind_3"/>
    <property type="match status" value="1"/>
</dbReference>
<dbReference type="Pfam" id="PF09179">
    <property type="entry name" value="TilS"/>
    <property type="match status" value="1"/>
</dbReference>
<dbReference type="Pfam" id="PF11734">
    <property type="entry name" value="TilS_C"/>
    <property type="match status" value="1"/>
</dbReference>
<dbReference type="SMART" id="SM00977">
    <property type="entry name" value="TilS_C"/>
    <property type="match status" value="1"/>
</dbReference>
<dbReference type="SUPFAM" id="SSF52402">
    <property type="entry name" value="Adenine nucleotide alpha hydrolases-like"/>
    <property type="match status" value="1"/>
</dbReference>
<dbReference type="SUPFAM" id="SSF82829">
    <property type="entry name" value="MesJ substrate recognition domain-like"/>
    <property type="match status" value="1"/>
</dbReference>
<dbReference type="SUPFAM" id="SSF56037">
    <property type="entry name" value="PheT/TilS domain"/>
    <property type="match status" value="1"/>
</dbReference>
<protein>
    <recommendedName>
        <fullName evidence="1">tRNA(Ile)-lysidine synthase</fullName>
        <ecNumber evidence="1">6.3.4.19</ecNumber>
    </recommendedName>
    <alternativeName>
        <fullName evidence="1">tRNA(Ile)-2-lysyl-cytidine synthase</fullName>
    </alternativeName>
    <alternativeName>
        <fullName evidence="1">tRNA(Ile)-lysidine synthetase</fullName>
    </alternativeName>
</protein>
<feature type="chain" id="PRO_0000181635" description="tRNA(Ile)-lysidine synthase">
    <location>
        <begin position="1"/>
        <end position="459"/>
    </location>
</feature>
<feature type="binding site" evidence="1">
    <location>
        <begin position="38"/>
        <end position="43"/>
    </location>
    <ligand>
        <name>ATP</name>
        <dbReference type="ChEBI" id="CHEBI:30616"/>
    </ligand>
</feature>
<name>TILS_ACIAD</name>
<accession>Q6F880</accession>
<evidence type="ECO:0000255" key="1">
    <source>
        <dbReference type="HAMAP-Rule" id="MF_01161"/>
    </source>
</evidence>
<gene>
    <name evidence="1" type="primary">tilS</name>
    <name type="ordered locus">ACIAD3034</name>
</gene>
<comment type="function">
    <text evidence="1">Ligates lysine onto the cytidine present at position 34 of the AUA codon-specific tRNA(Ile) that contains the anticodon CAU, in an ATP-dependent manner. Cytidine is converted to lysidine, thus changing the amino acid specificity of the tRNA from methionine to isoleucine.</text>
</comment>
<comment type="catalytic activity">
    <reaction evidence="1">
        <text>cytidine(34) in tRNA(Ile2) + L-lysine + ATP = lysidine(34) in tRNA(Ile2) + AMP + diphosphate + H(+)</text>
        <dbReference type="Rhea" id="RHEA:43744"/>
        <dbReference type="Rhea" id="RHEA-COMP:10625"/>
        <dbReference type="Rhea" id="RHEA-COMP:10670"/>
        <dbReference type="ChEBI" id="CHEBI:15378"/>
        <dbReference type="ChEBI" id="CHEBI:30616"/>
        <dbReference type="ChEBI" id="CHEBI:32551"/>
        <dbReference type="ChEBI" id="CHEBI:33019"/>
        <dbReference type="ChEBI" id="CHEBI:82748"/>
        <dbReference type="ChEBI" id="CHEBI:83665"/>
        <dbReference type="ChEBI" id="CHEBI:456215"/>
        <dbReference type="EC" id="6.3.4.19"/>
    </reaction>
</comment>
<comment type="subcellular location">
    <subcellularLocation>
        <location evidence="1">Cytoplasm</location>
    </subcellularLocation>
</comment>
<comment type="domain">
    <text>The N-terminal region contains the highly conserved SGGXDS motif, predicted to be a P-loop motif involved in ATP binding.</text>
</comment>
<comment type="similarity">
    <text evidence="1">Belongs to the tRNA(Ile)-lysidine synthase family.</text>
</comment>
<organism>
    <name type="scientific">Acinetobacter baylyi (strain ATCC 33305 / BD413 / ADP1)</name>
    <dbReference type="NCBI Taxonomy" id="62977"/>
    <lineage>
        <taxon>Bacteria</taxon>
        <taxon>Pseudomonadati</taxon>
        <taxon>Pseudomonadota</taxon>
        <taxon>Gammaproteobacteria</taxon>
        <taxon>Moraxellales</taxon>
        <taxon>Moraxellaceae</taxon>
        <taxon>Acinetobacter</taxon>
    </lineage>
</organism>
<reference key="1">
    <citation type="journal article" date="2004" name="Nucleic Acids Res.">
        <title>Unique features revealed by the genome sequence of Acinetobacter sp. ADP1, a versatile and naturally transformation competent bacterium.</title>
        <authorList>
            <person name="Barbe V."/>
            <person name="Vallenet D."/>
            <person name="Fonknechten N."/>
            <person name="Kreimeyer A."/>
            <person name="Oztas S."/>
            <person name="Labarre L."/>
            <person name="Cruveiller S."/>
            <person name="Robert C."/>
            <person name="Duprat S."/>
            <person name="Wincker P."/>
            <person name="Ornston L.N."/>
            <person name="Weissenbach J."/>
            <person name="Marliere P."/>
            <person name="Cohen G.N."/>
            <person name="Medigue C."/>
        </authorList>
    </citation>
    <scope>NUCLEOTIDE SEQUENCE [LARGE SCALE GENOMIC DNA]</scope>
    <source>
        <strain>ATCC 33305 / BD413 / ADP1</strain>
    </source>
</reference>